<feature type="chain" id="PRO_0000189207" description="4-diphosphocytidyl-2-C-methyl-D-erythritol kinase">
    <location>
        <begin position="1"/>
        <end position="280"/>
    </location>
</feature>
<feature type="active site" evidence="1">
    <location>
        <position position="8"/>
    </location>
</feature>
<feature type="active site" evidence="1">
    <location>
        <position position="133"/>
    </location>
</feature>
<feature type="binding site" evidence="1">
    <location>
        <begin position="91"/>
        <end position="101"/>
    </location>
    <ligand>
        <name>ATP</name>
        <dbReference type="ChEBI" id="CHEBI:30616"/>
    </ligand>
</feature>
<name>ISPE_CLOAB</name>
<accession>Q97F51</accession>
<keyword id="KW-0067">ATP-binding</keyword>
<keyword id="KW-0414">Isoprene biosynthesis</keyword>
<keyword id="KW-0418">Kinase</keyword>
<keyword id="KW-0547">Nucleotide-binding</keyword>
<keyword id="KW-1185">Reference proteome</keyword>
<keyword id="KW-0808">Transferase</keyword>
<reference key="1">
    <citation type="journal article" date="2001" name="J. Bacteriol.">
        <title>Genome sequence and comparative analysis of the solvent-producing bacterium Clostridium acetobutylicum.</title>
        <authorList>
            <person name="Noelling J."/>
            <person name="Breton G."/>
            <person name="Omelchenko M.V."/>
            <person name="Makarova K.S."/>
            <person name="Zeng Q."/>
            <person name="Gibson R."/>
            <person name="Lee H.M."/>
            <person name="Dubois J."/>
            <person name="Qiu D."/>
            <person name="Hitti J."/>
            <person name="Wolf Y.I."/>
            <person name="Tatusov R.L."/>
            <person name="Sabathe F."/>
            <person name="Doucette-Stamm L.A."/>
            <person name="Soucaille P."/>
            <person name="Daly M.J."/>
            <person name="Bennett G.N."/>
            <person name="Koonin E.V."/>
            <person name="Smith D.R."/>
        </authorList>
    </citation>
    <scope>NUCLEOTIDE SEQUENCE [LARGE SCALE GENOMIC DNA]</scope>
    <source>
        <strain>ATCC 824 / DSM 792 / JCM 1419 / IAM 19013 / LMG 5710 / NBRC 13948 / NRRL B-527 / VKM B-1787 / 2291 / W</strain>
    </source>
</reference>
<gene>
    <name evidence="1" type="primary">ispE</name>
    <name type="ordered locus">CA_C2902</name>
</gene>
<evidence type="ECO:0000255" key="1">
    <source>
        <dbReference type="HAMAP-Rule" id="MF_00061"/>
    </source>
</evidence>
<protein>
    <recommendedName>
        <fullName evidence="1">4-diphosphocytidyl-2-C-methyl-D-erythritol kinase</fullName>
        <shortName evidence="1">CMK</shortName>
        <ecNumber evidence="1">2.7.1.148</ecNumber>
    </recommendedName>
    <alternativeName>
        <fullName evidence="1">4-(cytidine-5'-diphospho)-2-C-methyl-D-erythritol kinase</fullName>
    </alternativeName>
</protein>
<comment type="function">
    <text evidence="1">Catalyzes the phosphorylation of the position 2 hydroxy group of 4-diphosphocytidyl-2C-methyl-D-erythritol.</text>
</comment>
<comment type="catalytic activity">
    <reaction evidence="1">
        <text>4-CDP-2-C-methyl-D-erythritol + ATP = 4-CDP-2-C-methyl-D-erythritol 2-phosphate + ADP + H(+)</text>
        <dbReference type="Rhea" id="RHEA:18437"/>
        <dbReference type="ChEBI" id="CHEBI:15378"/>
        <dbReference type="ChEBI" id="CHEBI:30616"/>
        <dbReference type="ChEBI" id="CHEBI:57823"/>
        <dbReference type="ChEBI" id="CHEBI:57919"/>
        <dbReference type="ChEBI" id="CHEBI:456216"/>
        <dbReference type="EC" id="2.7.1.148"/>
    </reaction>
</comment>
<comment type="pathway">
    <text evidence="1">Isoprenoid biosynthesis; isopentenyl diphosphate biosynthesis via DXP pathway; isopentenyl diphosphate from 1-deoxy-D-xylulose 5-phosphate: step 3/6.</text>
</comment>
<comment type="similarity">
    <text evidence="1">Belongs to the GHMP kinase family. IspE subfamily.</text>
</comment>
<dbReference type="EC" id="2.7.1.148" evidence="1"/>
<dbReference type="EMBL" id="AE001437">
    <property type="protein sequence ID" value="AAK80844.1"/>
    <property type="molecule type" value="Genomic_DNA"/>
</dbReference>
<dbReference type="PIR" id="A97257">
    <property type="entry name" value="A97257"/>
</dbReference>
<dbReference type="RefSeq" id="NP_349504.1">
    <property type="nucleotide sequence ID" value="NC_003030.1"/>
</dbReference>
<dbReference type="RefSeq" id="WP_010966185.1">
    <property type="nucleotide sequence ID" value="NC_003030.1"/>
</dbReference>
<dbReference type="SMR" id="Q97F51"/>
<dbReference type="STRING" id="272562.CA_C2902"/>
<dbReference type="GeneID" id="44999390"/>
<dbReference type="KEGG" id="cac:CA_C2902"/>
<dbReference type="PATRIC" id="fig|272562.8.peg.3087"/>
<dbReference type="eggNOG" id="COG1947">
    <property type="taxonomic scope" value="Bacteria"/>
</dbReference>
<dbReference type="HOGENOM" id="CLU_053057_1_1_9"/>
<dbReference type="OrthoDB" id="9809438at2"/>
<dbReference type="UniPathway" id="UPA00056">
    <property type="reaction ID" value="UER00094"/>
</dbReference>
<dbReference type="Proteomes" id="UP000000814">
    <property type="component" value="Chromosome"/>
</dbReference>
<dbReference type="GO" id="GO:0050515">
    <property type="term" value="F:4-(cytidine 5'-diphospho)-2-C-methyl-D-erythritol kinase activity"/>
    <property type="evidence" value="ECO:0007669"/>
    <property type="project" value="UniProtKB-UniRule"/>
</dbReference>
<dbReference type="GO" id="GO:0005524">
    <property type="term" value="F:ATP binding"/>
    <property type="evidence" value="ECO:0007669"/>
    <property type="project" value="UniProtKB-UniRule"/>
</dbReference>
<dbReference type="GO" id="GO:0019288">
    <property type="term" value="P:isopentenyl diphosphate biosynthetic process, methylerythritol 4-phosphate pathway"/>
    <property type="evidence" value="ECO:0007669"/>
    <property type="project" value="UniProtKB-UniRule"/>
</dbReference>
<dbReference type="GO" id="GO:0016114">
    <property type="term" value="P:terpenoid biosynthetic process"/>
    <property type="evidence" value="ECO:0007669"/>
    <property type="project" value="InterPro"/>
</dbReference>
<dbReference type="Gene3D" id="3.30.230.10">
    <property type="match status" value="1"/>
</dbReference>
<dbReference type="Gene3D" id="3.30.70.890">
    <property type="entry name" value="GHMP kinase, C-terminal domain"/>
    <property type="match status" value="1"/>
</dbReference>
<dbReference type="HAMAP" id="MF_00061">
    <property type="entry name" value="IspE"/>
    <property type="match status" value="1"/>
</dbReference>
<dbReference type="InterPro" id="IPR013750">
    <property type="entry name" value="GHMP_kinase_C_dom"/>
</dbReference>
<dbReference type="InterPro" id="IPR036554">
    <property type="entry name" value="GHMP_kinase_C_sf"/>
</dbReference>
<dbReference type="InterPro" id="IPR006204">
    <property type="entry name" value="GHMP_kinase_N_dom"/>
</dbReference>
<dbReference type="InterPro" id="IPR004424">
    <property type="entry name" value="IspE"/>
</dbReference>
<dbReference type="InterPro" id="IPR020568">
    <property type="entry name" value="Ribosomal_Su5_D2-typ_SF"/>
</dbReference>
<dbReference type="InterPro" id="IPR014721">
    <property type="entry name" value="Ribsml_uS5_D2-typ_fold_subgr"/>
</dbReference>
<dbReference type="NCBIfam" id="TIGR00154">
    <property type="entry name" value="ispE"/>
    <property type="match status" value="1"/>
</dbReference>
<dbReference type="PANTHER" id="PTHR43527">
    <property type="entry name" value="4-DIPHOSPHOCYTIDYL-2-C-METHYL-D-ERYTHRITOL KINASE, CHLOROPLASTIC"/>
    <property type="match status" value="1"/>
</dbReference>
<dbReference type="PANTHER" id="PTHR43527:SF2">
    <property type="entry name" value="4-DIPHOSPHOCYTIDYL-2-C-METHYL-D-ERYTHRITOL KINASE, CHLOROPLASTIC"/>
    <property type="match status" value="1"/>
</dbReference>
<dbReference type="Pfam" id="PF08544">
    <property type="entry name" value="GHMP_kinases_C"/>
    <property type="match status" value="1"/>
</dbReference>
<dbReference type="Pfam" id="PF00288">
    <property type="entry name" value="GHMP_kinases_N"/>
    <property type="match status" value="1"/>
</dbReference>
<dbReference type="PIRSF" id="PIRSF010376">
    <property type="entry name" value="IspE"/>
    <property type="match status" value="1"/>
</dbReference>
<dbReference type="SUPFAM" id="SSF55060">
    <property type="entry name" value="GHMP Kinase, C-terminal domain"/>
    <property type="match status" value="1"/>
</dbReference>
<dbReference type="SUPFAM" id="SSF54211">
    <property type="entry name" value="Ribosomal protein S5 domain 2-like"/>
    <property type="match status" value="1"/>
</dbReference>
<sequence>MNVKAYAKVNISLDVIGKREDGYHLLKMIMQSINLYDVLDIRIIDEGIKITSNRRNIPTNDKNIAYRAAKLFMDTYKIDKGISIHINKRIPVAAGLAGGSADGAAVLKAMRDIFKKDVSDEELINLGVKIGADIPFCIVGGTAFCEGIGEKITKLRSMNGKIIVLVKPDFGVSTKMVYTEYDKCLDVKHPDSEGLVKAVNNGHFKFVVNNMVNVLENVTAVKYKEINEIKEKALEYNSIGTMMSGSGPTVFSFFDNTKEAEKYFYEMKKEYNKVFITRTV</sequence>
<organism>
    <name type="scientific">Clostridium acetobutylicum (strain ATCC 824 / DSM 792 / JCM 1419 / IAM 19013 / LMG 5710 / NBRC 13948 / NRRL B-527 / VKM B-1787 / 2291 / W)</name>
    <dbReference type="NCBI Taxonomy" id="272562"/>
    <lineage>
        <taxon>Bacteria</taxon>
        <taxon>Bacillati</taxon>
        <taxon>Bacillota</taxon>
        <taxon>Clostridia</taxon>
        <taxon>Eubacteriales</taxon>
        <taxon>Clostridiaceae</taxon>
        <taxon>Clostridium</taxon>
    </lineage>
</organism>
<proteinExistence type="inferred from homology"/>